<proteinExistence type="inferred from homology"/>
<organism>
    <name type="scientific">Ralstonia nicotianae (strain ATCC BAA-1114 / GMI1000)</name>
    <name type="common">Ralstonia solanacearum</name>
    <dbReference type="NCBI Taxonomy" id="267608"/>
    <lineage>
        <taxon>Bacteria</taxon>
        <taxon>Pseudomonadati</taxon>
        <taxon>Pseudomonadota</taxon>
        <taxon>Betaproteobacteria</taxon>
        <taxon>Burkholderiales</taxon>
        <taxon>Burkholderiaceae</taxon>
        <taxon>Ralstonia</taxon>
        <taxon>Ralstonia solanacearum species complex</taxon>
    </lineage>
</organism>
<gene>
    <name evidence="1" type="primary">groES</name>
    <name evidence="1" type="synonym">groS</name>
    <name type="synonym">mopB</name>
    <name type="ordered locus">RSc0641</name>
    <name type="ORF">RS01545</name>
</gene>
<protein>
    <recommendedName>
        <fullName evidence="1">Co-chaperonin GroES</fullName>
    </recommendedName>
    <alternativeName>
        <fullName evidence="1">10 kDa chaperonin</fullName>
    </alternativeName>
    <alternativeName>
        <fullName evidence="1">Chaperonin-10</fullName>
        <shortName evidence="1">Cpn10</shortName>
    </alternativeName>
</protein>
<comment type="function">
    <text evidence="1">Together with the chaperonin GroEL, plays an essential role in assisting protein folding. The GroEL-GroES system forms a nano-cage that allows encapsulation of the non-native substrate proteins and provides a physical environment optimized to promote and accelerate protein folding. GroES binds to the apical surface of the GroEL ring, thereby capping the opening of the GroEL channel.</text>
</comment>
<comment type="subunit">
    <text evidence="1">Heptamer of 7 subunits arranged in a ring. Interacts with the chaperonin GroEL.</text>
</comment>
<comment type="subcellular location">
    <subcellularLocation>
        <location evidence="1">Cytoplasm</location>
    </subcellularLocation>
</comment>
<comment type="similarity">
    <text evidence="1">Belongs to the GroES chaperonin family.</text>
</comment>
<feature type="chain" id="PRO_0000174811" description="Co-chaperonin GroES">
    <location>
        <begin position="1"/>
        <end position="96"/>
    </location>
</feature>
<reference key="1">
    <citation type="journal article" date="2002" name="Nature">
        <title>Genome sequence of the plant pathogen Ralstonia solanacearum.</title>
        <authorList>
            <person name="Salanoubat M."/>
            <person name="Genin S."/>
            <person name="Artiguenave F."/>
            <person name="Gouzy J."/>
            <person name="Mangenot S."/>
            <person name="Arlat M."/>
            <person name="Billault A."/>
            <person name="Brottier P."/>
            <person name="Camus J.-C."/>
            <person name="Cattolico L."/>
            <person name="Chandler M."/>
            <person name="Choisne N."/>
            <person name="Claudel-Renard C."/>
            <person name="Cunnac S."/>
            <person name="Demange N."/>
            <person name="Gaspin C."/>
            <person name="Lavie M."/>
            <person name="Moisan A."/>
            <person name="Robert C."/>
            <person name="Saurin W."/>
            <person name="Schiex T."/>
            <person name="Siguier P."/>
            <person name="Thebault P."/>
            <person name="Whalen M."/>
            <person name="Wincker P."/>
            <person name="Levy M."/>
            <person name="Weissenbach J."/>
            <person name="Boucher C.A."/>
        </authorList>
    </citation>
    <scope>NUCLEOTIDE SEQUENCE [LARGE SCALE GENOMIC DNA]</scope>
    <source>
        <strain>ATCC BAA-1114 / GMI1000</strain>
    </source>
</reference>
<evidence type="ECO:0000255" key="1">
    <source>
        <dbReference type="HAMAP-Rule" id="MF_00580"/>
    </source>
</evidence>
<keyword id="KW-0143">Chaperone</keyword>
<keyword id="KW-0963">Cytoplasm</keyword>
<keyword id="KW-1185">Reference proteome</keyword>
<accession>Q8Y1P9</accession>
<sequence>MNLRPLHDRVIVKRLDNETKTASGIVIPDAAAEKPDQGEVLAIGPGKKDDKGNPIALDVKVGDRVLFGKYAGQAVKVDGQELLVMREEDIMAVVTK</sequence>
<dbReference type="EMBL" id="AL646052">
    <property type="protein sequence ID" value="CAD14171.1"/>
    <property type="molecule type" value="Genomic_DNA"/>
</dbReference>
<dbReference type="RefSeq" id="WP_011000598.1">
    <property type="nucleotide sequence ID" value="NC_003295.1"/>
</dbReference>
<dbReference type="SMR" id="Q8Y1P9"/>
<dbReference type="STRING" id="267608.RSc0641"/>
<dbReference type="EnsemblBacteria" id="CAD14171">
    <property type="protein sequence ID" value="CAD14171"/>
    <property type="gene ID" value="RSc0641"/>
</dbReference>
<dbReference type="KEGG" id="rso:RSc0641"/>
<dbReference type="eggNOG" id="COG0234">
    <property type="taxonomic scope" value="Bacteria"/>
</dbReference>
<dbReference type="HOGENOM" id="CLU_132825_1_0_4"/>
<dbReference type="Proteomes" id="UP000001436">
    <property type="component" value="Chromosome"/>
</dbReference>
<dbReference type="GO" id="GO:0005737">
    <property type="term" value="C:cytoplasm"/>
    <property type="evidence" value="ECO:0007669"/>
    <property type="project" value="UniProtKB-SubCell"/>
</dbReference>
<dbReference type="GO" id="GO:0005524">
    <property type="term" value="F:ATP binding"/>
    <property type="evidence" value="ECO:0007669"/>
    <property type="project" value="InterPro"/>
</dbReference>
<dbReference type="GO" id="GO:0046872">
    <property type="term" value="F:metal ion binding"/>
    <property type="evidence" value="ECO:0007669"/>
    <property type="project" value="TreeGrafter"/>
</dbReference>
<dbReference type="GO" id="GO:0044183">
    <property type="term" value="F:protein folding chaperone"/>
    <property type="evidence" value="ECO:0007669"/>
    <property type="project" value="InterPro"/>
</dbReference>
<dbReference type="GO" id="GO:0051087">
    <property type="term" value="F:protein-folding chaperone binding"/>
    <property type="evidence" value="ECO:0007669"/>
    <property type="project" value="TreeGrafter"/>
</dbReference>
<dbReference type="GO" id="GO:0051082">
    <property type="term" value="F:unfolded protein binding"/>
    <property type="evidence" value="ECO:0007669"/>
    <property type="project" value="TreeGrafter"/>
</dbReference>
<dbReference type="GO" id="GO:0051085">
    <property type="term" value="P:chaperone cofactor-dependent protein refolding"/>
    <property type="evidence" value="ECO:0007669"/>
    <property type="project" value="TreeGrafter"/>
</dbReference>
<dbReference type="CDD" id="cd00320">
    <property type="entry name" value="cpn10"/>
    <property type="match status" value="1"/>
</dbReference>
<dbReference type="FunFam" id="2.30.33.40:FF:000001">
    <property type="entry name" value="10 kDa chaperonin"/>
    <property type="match status" value="1"/>
</dbReference>
<dbReference type="Gene3D" id="2.30.33.40">
    <property type="entry name" value="GroES chaperonin"/>
    <property type="match status" value="1"/>
</dbReference>
<dbReference type="HAMAP" id="MF_00580">
    <property type="entry name" value="CH10"/>
    <property type="match status" value="1"/>
</dbReference>
<dbReference type="InterPro" id="IPR020818">
    <property type="entry name" value="Chaperonin_GroES"/>
</dbReference>
<dbReference type="InterPro" id="IPR037124">
    <property type="entry name" value="Chaperonin_GroES_sf"/>
</dbReference>
<dbReference type="InterPro" id="IPR018369">
    <property type="entry name" value="Chaprnonin_Cpn10_CS"/>
</dbReference>
<dbReference type="InterPro" id="IPR011032">
    <property type="entry name" value="GroES-like_sf"/>
</dbReference>
<dbReference type="NCBIfam" id="NF001527">
    <property type="entry name" value="PRK00364.1-2"/>
    <property type="match status" value="1"/>
</dbReference>
<dbReference type="NCBIfam" id="NF001529">
    <property type="entry name" value="PRK00364.1-5"/>
    <property type="match status" value="1"/>
</dbReference>
<dbReference type="NCBIfam" id="NF001531">
    <property type="entry name" value="PRK00364.2-2"/>
    <property type="match status" value="1"/>
</dbReference>
<dbReference type="NCBIfam" id="NF001533">
    <property type="entry name" value="PRK00364.2-4"/>
    <property type="match status" value="1"/>
</dbReference>
<dbReference type="PANTHER" id="PTHR10772">
    <property type="entry name" value="10 KDA HEAT SHOCK PROTEIN"/>
    <property type="match status" value="1"/>
</dbReference>
<dbReference type="PANTHER" id="PTHR10772:SF58">
    <property type="entry name" value="CO-CHAPERONIN GROES"/>
    <property type="match status" value="1"/>
</dbReference>
<dbReference type="Pfam" id="PF00166">
    <property type="entry name" value="Cpn10"/>
    <property type="match status" value="1"/>
</dbReference>
<dbReference type="PRINTS" id="PR00297">
    <property type="entry name" value="CHAPERONIN10"/>
</dbReference>
<dbReference type="SMART" id="SM00883">
    <property type="entry name" value="Cpn10"/>
    <property type="match status" value="1"/>
</dbReference>
<dbReference type="SUPFAM" id="SSF50129">
    <property type="entry name" value="GroES-like"/>
    <property type="match status" value="1"/>
</dbReference>
<dbReference type="PROSITE" id="PS00681">
    <property type="entry name" value="CHAPERONINS_CPN10"/>
    <property type="match status" value="1"/>
</dbReference>
<name>CH10_RALN1</name>